<protein>
    <recommendedName>
        <fullName>Probable transglycosylase SceD</fullName>
        <ecNumber>3.2.-.-</ecNumber>
    </recommendedName>
</protein>
<proteinExistence type="evidence at protein level"/>
<organism>
    <name type="scientific">Staphylococcus aureus (strain NCTC 8325 / PS 47)</name>
    <dbReference type="NCBI Taxonomy" id="93061"/>
    <lineage>
        <taxon>Bacteria</taxon>
        <taxon>Bacillati</taxon>
        <taxon>Bacillota</taxon>
        <taxon>Bacilli</taxon>
        <taxon>Bacillales</taxon>
        <taxon>Staphylococcaceae</taxon>
        <taxon>Staphylococcus</taxon>
    </lineage>
</organism>
<accession>Q2FWF8</accession>
<keyword id="KW-0903">Direct protein sequencing</keyword>
<keyword id="KW-0326">Glycosidase</keyword>
<keyword id="KW-0378">Hydrolase</keyword>
<keyword id="KW-1185">Reference proteome</keyword>
<keyword id="KW-0964">Secreted</keyword>
<keyword id="KW-0732">Signal</keyword>
<evidence type="ECO:0000250" key="1"/>
<evidence type="ECO:0000256" key="2">
    <source>
        <dbReference type="SAM" id="MobiDB-lite"/>
    </source>
</evidence>
<evidence type="ECO:0000269" key="3">
    <source>
    </source>
</evidence>
<evidence type="ECO:0000305" key="4"/>
<comment type="function">
    <text evidence="3">Is able to cleave peptidoglycan and affects clumping and separation of bacterial cells. Is required for normal growth under stressful conditions. Is essential for nasal colonization.</text>
</comment>
<comment type="subcellular location">
    <subcellularLocation>
        <location evidence="1">Secreted</location>
    </subcellularLocation>
</comment>
<comment type="induction">
    <text evidence="3">Highest expression during the exponential phase. Expression is increased about 3-fold by inactivation of isaA. Up-regulated by the presence of NaCl in a IsaA independent manner. Seems to be negatively regulated by SarA. Negatively regulated by the two-component systems LytSR and SaeRS whereas is positively regulated by sigma-B factor, agr and the two-component system YycFG.</text>
</comment>
<comment type="disruption phenotype">
    <text evidence="3">Cells grow slightly less well than wild-type in the presence of 2.5 M NaCl. Inactivation of both isaA and sceD genes results in a high degree of clumping and the double mutant is also attenuated for virulence.</text>
</comment>
<comment type="similarity">
    <text evidence="4">Belongs to the transglycosylase family. SceD subfamily.</text>
</comment>
<feature type="signal peptide" evidence="1">
    <location>
        <begin position="1"/>
        <end position="27"/>
    </location>
</feature>
<feature type="chain" id="PRO_0000320309" description="Probable transglycosylase SceD">
    <location>
        <begin position="28"/>
        <end position="231"/>
    </location>
</feature>
<feature type="region of interest" description="Disordered" evidence="2">
    <location>
        <begin position="106"/>
        <end position="153"/>
    </location>
</feature>
<feature type="compositionally biased region" description="Polar residues" evidence="2">
    <location>
        <begin position="106"/>
        <end position="116"/>
    </location>
</feature>
<feature type="compositionally biased region" description="Low complexity" evidence="2">
    <location>
        <begin position="119"/>
        <end position="137"/>
    </location>
</feature>
<feature type="compositionally biased region" description="Polar residues" evidence="2">
    <location>
        <begin position="138"/>
        <end position="153"/>
    </location>
</feature>
<gene>
    <name type="primary">sceD</name>
    <name type="ordered locus">SAOUHSC_02333</name>
</gene>
<sequence>MKKTLLASSLAVGLGIVAGNAGHEAHASEADLNKASLAQMAQSNDQTLNQKPIEAGAYNYTFDYEGFTYHFESDGTHFAWNYHATGTNGADMSAQAPATNNVAPSAVQANQVQSQEVEAPQNAQTQQPQASTSNNSQVTATPTESKSSEGSSVNVNAHLKQIAQRESGGNIHAVNPTSGAAGKYQFLQSTWDSVAPAKYKGVSPANAPESVQDAAAVKLYNTGGAGHWVTA</sequence>
<dbReference type="EC" id="3.2.-.-"/>
<dbReference type="EMBL" id="CP000253">
    <property type="protein sequence ID" value="ABD31367.1"/>
    <property type="molecule type" value="Genomic_DNA"/>
</dbReference>
<dbReference type="RefSeq" id="WP_000752008.1">
    <property type="nucleotide sequence ID" value="NZ_LS483365.1"/>
</dbReference>
<dbReference type="RefSeq" id="YP_500812.1">
    <property type="nucleotide sequence ID" value="NC_007795.1"/>
</dbReference>
<dbReference type="SMR" id="Q2FWF8"/>
<dbReference type="STRING" id="93061.SAOUHSC_02333"/>
<dbReference type="CAZy" id="GH23">
    <property type="family name" value="Glycoside Hydrolase Family 23"/>
</dbReference>
<dbReference type="PaxDb" id="1280-SAXN108_2341"/>
<dbReference type="GeneID" id="3920958"/>
<dbReference type="KEGG" id="sao:SAOUHSC_02333"/>
<dbReference type="PATRIC" id="fig|93061.5.peg.2114"/>
<dbReference type="eggNOG" id="COG1388">
    <property type="taxonomic scope" value="Bacteria"/>
</dbReference>
<dbReference type="HOGENOM" id="CLU_099865_0_0_9"/>
<dbReference type="OrthoDB" id="2314263at2"/>
<dbReference type="Proteomes" id="UP000008816">
    <property type="component" value="Chromosome"/>
</dbReference>
<dbReference type="GO" id="GO:0005576">
    <property type="term" value="C:extracellular region"/>
    <property type="evidence" value="ECO:0007669"/>
    <property type="project" value="UniProtKB-SubCell"/>
</dbReference>
<dbReference type="GO" id="GO:0016798">
    <property type="term" value="F:hydrolase activity, acting on glycosyl bonds"/>
    <property type="evidence" value="ECO:0007669"/>
    <property type="project" value="UniProtKB-KW"/>
</dbReference>
<dbReference type="CDD" id="cd13925">
    <property type="entry name" value="RPF"/>
    <property type="match status" value="1"/>
</dbReference>
<dbReference type="Gene3D" id="1.10.530.10">
    <property type="match status" value="1"/>
</dbReference>
<dbReference type="InterPro" id="IPR023346">
    <property type="entry name" value="Lysozyme-like_dom_sf"/>
</dbReference>
<dbReference type="InterPro" id="IPR010618">
    <property type="entry name" value="RPF"/>
</dbReference>
<dbReference type="Pfam" id="PF06737">
    <property type="entry name" value="Transglycosylas"/>
    <property type="match status" value="1"/>
</dbReference>
<dbReference type="SUPFAM" id="SSF53955">
    <property type="entry name" value="Lysozyme-like"/>
    <property type="match status" value="1"/>
</dbReference>
<name>SCED_STAA8</name>
<reference key="1">
    <citation type="book" date="2006" name="Gram positive pathogens, 2nd edition">
        <title>The Staphylococcus aureus NCTC 8325 genome.</title>
        <editorList>
            <person name="Fischetti V."/>
            <person name="Novick R."/>
            <person name="Ferretti J."/>
            <person name="Portnoy D."/>
            <person name="Rood J."/>
        </editorList>
        <authorList>
            <person name="Gillaspy A.F."/>
            <person name="Worrell V."/>
            <person name="Orvis J."/>
            <person name="Roe B.A."/>
            <person name="Dyer D.W."/>
            <person name="Iandolo J.J."/>
        </authorList>
    </citation>
    <scope>NUCLEOTIDE SEQUENCE [LARGE SCALE GENOMIC DNA]</scope>
    <source>
        <strain>NCTC 8325 / PS 47</strain>
    </source>
</reference>
<reference key="2">
    <citation type="journal article" date="2007" name="J. Bacteriol.">
        <title>Characterization of IsaA and SceD, two putative lytic transglycosylases of Staphylococcus aureus.</title>
        <authorList>
            <person name="Stapleton M.R."/>
            <person name="Horsburgh M.J."/>
            <person name="Hayhurst E.J."/>
            <person name="Wright L."/>
            <person name="Jonsson I.-M."/>
            <person name="Tarkowski A."/>
            <person name="Kokai-Kun J.F."/>
            <person name="Mond J.J."/>
            <person name="Foster S.J."/>
        </authorList>
    </citation>
    <scope>PROTEIN SEQUENCE OF N-TERMINUS</scope>
    <scope>CELL WALL HYDROLYTIC ACTIVITY</scope>
    <scope>FUNCTION</scope>
    <scope>INDUCTION</scope>
    <scope>DISRUPTION PHENOTYPE</scope>
</reference>